<accession>P43913</accession>
<sequence length="439" mass="49433">MSDNIYSVSQLNSAARQMLEGNFCQIWLTGEISNFTQPVSGHWYLTLKDENAQVRCAMFRMKNLRVAFRPQNGMQVLVRANVSLYEPRGDYQLIIDSMHPAGEGLLQQQFEALKMKLAAEGLFAQNLKKTLPHFSKAVGIITSSTGAALQDILHILARRDPSLKVVIYPTAVQGKEATAEIVQMIELANARQEVDVLIVGRGGGSLEDLWCFNEEEVARAIFRSTLPIISAVGHETDVTIADFVADLRAPTPSAAAELVSRNQDELLQQLRHQQQRLDMAFDRLFTRKSQRLKQLALRLQNQHPQNQLRAQQAKNEQLTHRLQLAILRQFENTQQKFTALSVRLKQNPLPYRIQRYQQGLEQLKVRLNFCVNRQVTERQNKLATLCGKLDGLSPLKVLARGYSIAENPQGKAIVSVKDVNQGDFITTQVADGKIVSKVL</sequence>
<comment type="function">
    <text evidence="1">Bidirectionally degrades single-stranded DNA into large acid-insoluble oligonucleotides, which are then degraded further into small acid-soluble oligonucleotides.</text>
</comment>
<comment type="catalytic activity">
    <reaction evidence="1">
        <text>Exonucleolytic cleavage in either 5'- to 3'- or 3'- to 5'-direction to yield nucleoside 5'-phosphates.</text>
        <dbReference type="EC" id="3.1.11.6"/>
    </reaction>
</comment>
<comment type="subunit">
    <text evidence="1">Heterooligomer composed of large and small subunits.</text>
</comment>
<comment type="subcellular location">
    <subcellularLocation>
        <location evidence="1">Cytoplasm</location>
    </subcellularLocation>
</comment>
<comment type="disruption phenotype">
    <text evidence="2">Essential, neither gene for this protein can be deleted (PubMed:18242643).</text>
</comment>
<comment type="similarity">
    <text evidence="1">Belongs to the XseA family.</text>
</comment>
<evidence type="ECO:0000255" key="1">
    <source>
        <dbReference type="HAMAP-Rule" id="MF_00378"/>
    </source>
</evidence>
<evidence type="ECO:0000269" key="2">
    <source>
    </source>
</evidence>
<organism>
    <name type="scientific">Haemophilus influenzae (strain ATCC 51907 / DSM 11121 / KW20 / Rd)</name>
    <dbReference type="NCBI Taxonomy" id="71421"/>
    <lineage>
        <taxon>Bacteria</taxon>
        <taxon>Pseudomonadati</taxon>
        <taxon>Pseudomonadota</taxon>
        <taxon>Gammaproteobacteria</taxon>
        <taxon>Pasteurellales</taxon>
        <taxon>Pasteurellaceae</taxon>
        <taxon>Haemophilus</taxon>
    </lineage>
</organism>
<protein>
    <recommendedName>
        <fullName evidence="1">Exodeoxyribonuclease 7 large subunit</fullName>
        <ecNumber evidence="1">3.1.11.6</ecNumber>
    </recommendedName>
    <alternativeName>
        <fullName evidence="1">Exodeoxyribonuclease VII large subunit</fullName>
        <shortName evidence="1">Exonuclease VII large subunit</shortName>
    </alternativeName>
</protein>
<reference key="1">
    <citation type="journal article" date="1995" name="Science">
        <title>Whole-genome random sequencing and assembly of Haemophilus influenzae Rd.</title>
        <authorList>
            <person name="Fleischmann R.D."/>
            <person name="Adams M.D."/>
            <person name="White O."/>
            <person name="Clayton R.A."/>
            <person name="Kirkness E.F."/>
            <person name="Kerlavage A.R."/>
            <person name="Bult C.J."/>
            <person name="Tomb J.-F."/>
            <person name="Dougherty B.A."/>
            <person name="Merrick J.M."/>
            <person name="McKenney K."/>
            <person name="Sutton G.G."/>
            <person name="FitzHugh W."/>
            <person name="Fields C.A."/>
            <person name="Gocayne J.D."/>
            <person name="Scott J.D."/>
            <person name="Shirley R."/>
            <person name="Liu L.-I."/>
            <person name="Glodek A."/>
            <person name="Kelley J.M."/>
            <person name="Weidman J.F."/>
            <person name="Phillips C.A."/>
            <person name="Spriggs T."/>
            <person name="Hedblom E."/>
            <person name="Cotton M.D."/>
            <person name="Utterback T.R."/>
            <person name="Hanna M.C."/>
            <person name="Nguyen D.T."/>
            <person name="Saudek D.M."/>
            <person name="Brandon R.C."/>
            <person name="Fine L.D."/>
            <person name="Fritchman J.L."/>
            <person name="Fuhrmann J.L."/>
            <person name="Geoghagen N.S.M."/>
            <person name="Gnehm C.L."/>
            <person name="McDonald L.A."/>
            <person name="Small K.V."/>
            <person name="Fraser C.M."/>
            <person name="Smith H.O."/>
            <person name="Venter J.C."/>
        </authorList>
    </citation>
    <scope>NUCLEOTIDE SEQUENCE [LARGE SCALE GENOMIC DNA]</scope>
    <source>
        <strain>ATCC 51907 / DSM 11121 / KW20 / Rd</strain>
    </source>
</reference>
<reference key="2">
    <citation type="journal article" date="2008" name="Mutat. Res.">
        <title>RecJ, ExoI and RecG are required for genome maintenance but not for generation of genetic diversity by repeat-mediated phase variation in Haemophilus influenzae.</title>
        <authorList>
            <person name="Kumar G.A."/>
            <person name="Woodhall M.R."/>
            <person name="Hood D.W."/>
            <person name="Moxon E.R."/>
            <person name="Bayliss C.D."/>
        </authorList>
    </citation>
    <scope>DISRUPTION PHENOTYPE</scope>
    <source>
        <strain>ATCC 51907 / DSM 11121 / KW20 / Rd</strain>
    </source>
</reference>
<keyword id="KW-0963">Cytoplasm</keyword>
<keyword id="KW-0269">Exonuclease</keyword>
<keyword id="KW-0378">Hydrolase</keyword>
<keyword id="KW-0540">Nuclease</keyword>
<keyword id="KW-1185">Reference proteome</keyword>
<gene>
    <name evidence="1" type="primary">xseA</name>
    <name type="ordered locus">HI_0397</name>
</gene>
<name>EX7L_HAEIN</name>
<dbReference type="EC" id="3.1.11.6" evidence="1"/>
<dbReference type="EMBL" id="L42023">
    <property type="protein sequence ID" value="AAC22056.1"/>
    <property type="molecule type" value="Genomic_DNA"/>
</dbReference>
<dbReference type="PIR" id="D64065">
    <property type="entry name" value="D64065"/>
</dbReference>
<dbReference type="RefSeq" id="NP_438559.1">
    <property type="nucleotide sequence ID" value="NC_000907.1"/>
</dbReference>
<dbReference type="SMR" id="P43913"/>
<dbReference type="STRING" id="71421.HI_0397"/>
<dbReference type="EnsemblBacteria" id="AAC22056">
    <property type="protein sequence ID" value="AAC22056"/>
    <property type="gene ID" value="HI_0397"/>
</dbReference>
<dbReference type="KEGG" id="hin:HI_0397"/>
<dbReference type="PATRIC" id="fig|71421.8.peg.416"/>
<dbReference type="eggNOG" id="COG1570">
    <property type="taxonomic scope" value="Bacteria"/>
</dbReference>
<dbReference type="HOGENOM" id="CLU_023625_3_1_6"/>
<dbReference type="OrthoDB" id="9802795at2"/>
<dbReference type="PhylomeDB" id="P43913"/>
<dbReference type="BioCyc" id="HINF71421:G1GJ1-412-MONOMER"/>
<dbReference type="Proteomes" id="UP000000579">
    <property type="component" value="Chromosome"/>
</dbReference>
<dbReference type="GO" id="GO:0005737">
    <property type="term" value="C:cytoplasm"/>
    <property type="evidence" value="ECO:0007669"/>
    <property type="project" value="UniProtKB-SubCell"/>
</dbReference>
<dbReference type="GO" id="GO:0009318">
    <property type="term" value="C:exodeoxyribonuclease VII complex"/>
    <property type="evidence" value="ECO:0007669"/>
    <property type="project" value="InterPro"/>
</dbReference>
<dbReference type="GO" id="GO:0008855">
    <property type="term" value="F:exodeoxyribonuclease VII activity"/>
    <property type="evidence" value="ECO:0007669"/>
    <property type="project" value="UniProtKB-UniRule"/>
</dbReference>
<dbReference type="GO" id="GO:0003676">
    <property type="term" value="F:nucleic acid binding"/>
    <property type="evidence" value="ECO:0007669"/>
    <property type="project" value="InterPro"/>
</dbReference>
<dbReference type="GO" id="GO:0006308">
    <property type="term" value="P:DNA catabolic process"/>
    <property type="evidence" value="ECO:0007669"/>
    <property type="project" value="UniProtKB-UniRule"/>
</dbReference>
<dbReference type="CDD" id="cd04489">
    <property type="entry name" value="ExoVII_LU_OBF"/>
    <property type="match status" value="1"/>
</dbReference>
<dbReference type="HAMAP" id="MF_00378">
    <property type="entry name" value="Exonuc_7_L"/>
    <property type="match status" value="1"/>
</dbReference>
<dbReference type="InterPro" id="IPR003753">
    <property type="entry name" value="Exonuc_VII_L"/>
</dbReference>
<dbReference type="InterPro" id="IPR020579">
    <property type="entry name" value="Exonuc_VII_lsu_C"/>
</dbReference>
<dbReference type="InterPro" id="IPR025824">
    <property type="entry name" value="OB-fold_nuc-bd_dom"/>
</dbReference>
<dbReference type="NCBIfam" id="TIGR00237">
    <property type="entry name" value="xseA"/>
    <property type="match status" value="1"/>
</dbReference>
<dbReference type="PANTHER" id="PTHR30008">
    <property type="entry name" value="EXODEOXYRIBONUCLEASE 7 LARGE SUBUNIT"/>
    <property type="match status" value="1"/>
</dbReference>
<dbReference type="PANTHER" id="PTHR30008:SF0">
    <property type="entry name" value="EXODEOXYRIBONUCLEASE 7 LARGE SUBUNIT"/>
    <property type="match status" value="1"/>
</dbReference>
<dbReference type="Pfam" id="PF02601">
    <property type="entry name" value="Exonuc_VII_L"/>
    <property type="match status" value="1"/>
</dbReference>
<dbReference type="Pfam" id="PF13742">
    <property type="entry name" value="tRNA_anti_2"/>
    <property type="match status" value="1"/>
</dbReference>
<proteinExistence type="inferred from homology"/>
<feature type="chain" id="PRO_0000197849" description="Exodeoxyribonuclease 7 large subunit">
    <location>
        <begin position="1"/>
        <end position="439"/>
    </location>
</feature>